<dbReference type="EC" id="3.1.1.74" evidence="5 6"/>
<dbReference type="EMBL" id="BA000055">
    <property type="protein sequence ID" value="BAE65128.1"/>
    <property type="molecule type" value="Genomic_DNA"/>
</dbReference>
<dbReference type="RefSeq" id="XP_023093588.1">
    <property type="nucleotide sequence ID" value="XM_023233048.1"/>
</dbReference>
<dbReference type="SMR" id="Q2TZY7"/>
<dbReference type="ESTHER" id="aspor-cuti2">
    <property type="family name" value="Cutinase"/>
</dbReference>
<dbReference type="EnsemblFungi" id="BAE65128">
    <property type="protein sequence ID" value="BAE65128"/>
    <property type="gene ID" value="AO090011000665"/>
</dbReference>
<dbReference type="GeneID" id="5998364"/>
<dbReference type="VEuPathDB" id="FungiDB:AO090011000665"/>
<dbReference type="HOGENOM" id="CLU_040058_2_0_1"/>
<dbReference type="OMA" id="ACKPITF"/>
<dbReference type="Proteomes" id="UP000006564">
    <property type="component" value="Chromosome 7"/>
</dbReference>
<dbReference type="GO" id="GO:0005576">
    <property type="term" value="C:extracellular region"/>
    <property type="evidence" value="ECO:0007669"/>
    <property type="project" value="UniProtKB-SubCell"/>
</dbReference>
<dbReference type="GO" id="GO:0050525">
    <property type="term" value="F:cutinase activity"/>
    <property type="evidence" value="ECO:0000250"/>
    <property type="project" value="UniProtKB"/>
</dbReference>
<dbReference type="GO" id="GO:0016052">
    <property type="term" value="P:carbohydrate catabolic process"/>
    <property type="evidence" value="ECO:0007669"/>
    <property type="project" value="TreeGrafter"/>
</dbReference>
<dbReference type="FunFam" id="3.40.50.1820:FF:000235">
    <property type="entry name" value="Cutinase 1"/>
    <property type="match status" value="1"/>
</dbReference>
<dbReference type="Gene3D" id="3.40.50.1820">
    <property type="entry name" value="alpha/beta hydrolase"/>
    <property type="match status" value="1"/>
</dbReference>
<dbReference type="InterPro" id="IPR029058">
    <property type="entry name" value="AB_hydrolase_fold"/>
</dbReference>
<dbReference type="InterPro" id="IPR000675">
    <property type="entry name" value="Cutinase/axe"/>
</dbReference>
<dbReference type="InterPro" id="IPR043580">
    <property type="entry name" value="CUTINASE_1"/>
</dbReference>
<dbReference type="InterPro" id="IPR043579">
    <property type="entry name" value="CUTINASE_2"/>
</dbReference>
<dbReference type="InterPro" id="IPR011150">
    <property type="entry name" value="Cutinase_monf"/>
</dbReference>
<dbReference type="PANTHER" id="PTHR48250:SF3">
    <property type="entry name" value="CUTINASE 1-RELATED"/>
    <property type="match status" value="1"/>
</dbReference>
<dbReference type="PANTHER" id="PTHR48250">
    <property type="entry name" value="CUTINASE 2-RELATED"/>
    <property type="match status" value="1"/>
</dbReference>
<dbReference type="Pfam" id="PF01083">
    <property type="entry name" value="Cutinase"/>
    <property type="match status" value="1"/>
</dbReference>
<dbReference type="PRINTS" id="PR00129">
    <property type="entry name" value="CUTINASE"/>
</dbReference>
<dbReference type="SMART" id="SM01110">
    <property type="entry name" value="Cutinase"/>
    <property type="match status" value="1"/>
</dbReference>
<dbReference type="SUPFAM" id="SSF53474">
    <property type="entry name" value="alpha/beta-Hydrolases"/>
    <property type="match status" value="1"/>
</dbReference>
<dbReference type="PROSITE" id="PS00155">
    <property type="entry name" value="CUTINASE_1"/>
    <property type="match status" value="1"/>
</dbReference>
<dbReference type="PROSITE" id="PS00931">
    <property type="entry name" value="CUTINASE_2"/>
    <property type="match status" value="1"/>
</dbReference>
<reference key="1">
    <citation type="journal article" date="2005" name="Nature">
        <title>Genome sequencing and analysis of Aspergillus oryzae.</title>
        <authorList>
            <person name="Machida M."/>
            <person name="Asai K."/>
            <person name="Sano M."/>
            <person name="Tanaka T."/>
            <person name="Kumagai T."/>
            <person name="Terai G."/>
            <person name="Kusumoto K."/>
            <person name="Arima T."/>
            <person name="Akita O."/>
            <person name="Kashiwagi Y."/>
            <person name="Abe K."/>
            <person name="Gomi K."/>
            <person name="Horiuchi H."/>
            <person name="Kitamoto K."/>
            <person name="Kobayashi T."/>
            <person name="Takeuchi M."/>
            <person name="Denning D.W."/>
            <person name="Galagan J.E."/>
            <person name="Nierman W.C."/>
            <person name="Yu J."/>
            <person name="Archer D.B."/>
            <person name="Bennett J.W."/>
            <person name="Bhatnagar D."/>
            <person name="Cleveland T.E."/>
            <person name="Fedorova N.D."/>
            <person name="Gotoh O."/>
            <person name="Horikawa H."/>
            <person name="Hosoyama A."/>
            <person name="Ichinomiya M."/>
            <person name="Igarashi R."/>
            <person name="Iwashita K."/>
            <person name="Juvvadi P.R."/>
            <person name="Kato M."/>
            <person name="Kato Y."/>
            <person name="Kin T."/>
            <person name="Kokubun A."/>
            <person name="Maeda H."/>
            <person name="Maeyama N."/>
            <person name="Maruyama J."/>
            <person name="Nagasaki H."/>
            <person name="Nakajima T."/>
            <person name="Oda K."/>
            <person name="Okada K."/>
            <person name="Paulsen I."/>
            <person name="Sakamoto K."/>
            <person name="Sawano T."/>
            <person name="Takahashi M."/>
            <person name="Takase K."/>
            <person name="Terabayashi Y."/>
            <person name="Wortman J.R."/>
            <person name="Yamada O."/>
            <person name="Yamagata Y."/>
            <person name="Anazawa H."/>
            <person name="Hata Y."/>
            <person name="Koide Y."/>
            <person name="Komori T."/>
            <person name="Koyama Y."/>
            <person name="Minetoki T."/>
            <person name="Suharnan S."/>
            <person name="Tanaka A."/>
            <person name="Isono K."/>
            <person name="Kuhara S."/>
            <person name="Ogasawara N."/>
            <person name="Kikuchi H."/>
        </authorList>
    </citation>
    <scope>NUCLEOTIDE SEQUENCE [LARGE SCALE GENOMIC DNA]</scope>
    <source>
        <strain>ATCC 42149 / RIB 40</strain>
    </source>
</reference>
<feature type="signal peptide" evidence="4">
    <location>
        <begin position="1"/>
        <end position="16"/>
    </location>
</feature>
<feature type="chain" id="PRO_0000233111" description="Probable cutinase 2">
    <location>
        <begin position="17"/>
        <end position="221"/>
    </location>
</feature>
<feature type="active site" description="Nucleophile" evidence="1">
    <location>
        <position position="126"/>
    </location>
</feature>
<feature type="active site" evidence="1">
    <location>
        <position position="181"/>
    </location>
</feature>
<feature type="active site" description="Proton donor/acceptor" evidence="1">
    <location>
        <position position="194"/>
    </location>
</feature>
<feature type="site" description="Transition state stabilizer" evidence="1">
    <location>
        <position position="48"/>
    </location>
</feature>
<feature type="site" description="Transition state stabilizer" evidence="1">
    <location>
        <position position="127"/>
    </location>
</feature>
<feature type="disulfide bond" evidence="3">
    <location>
        <begin position="37"/>
        <end position="115"/>
    </location>
</feature>
<feature type="disulfide bond" evidence="3">
    <location>
        <begin position="63"/>
        <end position="76"/>
    </location>
</feature>
<feature type="disulfide bond" evidence="3">
    <location>
        <begin position="177"/>
        <end position="184"/>
    </location>
</feature>
<keyword id="KW-1015">Disulfide bond</keyword>
<keyword id="KW-0378">Hydrolase</keyword>
<keyword id="KW-1185">Reference proteome</keyword>
<keyword id="KW-0964">Secreted</keyword>
<keyword id="KW-0719">Serine esterase</keyword>
<keyword id="KW-0732">Signal</keyword>
<gene>
    <name type="ORF">AO090011000665</name>
</gene>
<protein>
    <recommendedName>
        <fullName>Probable cutinase 2</fullName>
        <ecNumber evidence="5 6">3.1.1.74</ecNumber>
    </recommendedName>
    <alternativeName>
        <fullName>Cutin hydrolase 2</fullName>
    </alternativeName>
</protein>
<comment type="function">
    <text evidence="1">Catalyzes the hydrolysis of complex carboxylic polyesters found in the cell wall of plants (By similarity). Degrades cutin, a macromolecule that forms the structure of the plant cuticle (By similarity).</text>
</comment>
<comment type="catalytic activity">
    <reaction evidence="5 6">
        <text>cutin + H2O = cutin monomers.</text>
        <dbReference type="EC" id="3.1.1.74"/>
    </reaction>
</comment>
<comment type="subcellular location">
    <subcellularLocation>
        <location evidence="2">Secreted</location>
    </subcellularLocation>
</comment>
<comment type="similarity">
    <text evidence="7">Belongs to the cutinase family.</text>
</comment>
<evidence type="ECO:0000250" key="1">
    <source>
        <dbReference type="UniProtKB" id="P00590"/>
    </source>
</evidence>
<evidence type="ECO:0000250" key="2">
    <source>
        <dbReference type="UniProtKB" id="P11373"/>
    </source>
</evidence>
<evidence type="ECO:0000250" key="3">
    <source>
        <dbReference type="UniProtKB" id="P52956"/>
    </source>
</evidence>
<evidence type="ECO:0000255" key="4"/>
<evidence type="ECO:0000255" key="5">
    <source>
        <dbReference type="PROSITE-ProRule" id="PRU10108"/>
    </source>
</evidence>
<evidence type="ECO:0000255" key="6">
    <source>
        <dbReference type="PROSITE-ProRule" id="PRU10109"/>
    </source>
</evidence>
<evidence type="ECO:0000305" key="7"/>
<name>CUTI2_ASPOR</name>
<proteinExistence type="inferred from homology"/>
<accession>Q2TZY7</accession>
<sequence length="221" mass="23361">MNLRLLTLALAAVAAASPVDIQERQLSGGNELRDGSCKPITFIFARASTEPGLLGISTGPAVCNGLKMAKAGQVACQGVGPKYTADLASNALPENTSPAAIQEAQDLFQQAVTKCPDTQIVAGGYSQGTAVMDDSIKRLPDNVKEKIKGVVLFGYTRNAQEHGQIANFPKDKVKVYCAVGDMVCDGTLIVGPAHFTYLGNTGEATQFLLGYLRFLQLTQLP</sequence>
<organism>
    <name type="scientific">Aspergillus oryzae (strain ATCC 42149 / RIB 40)</name>
    <name type="common">Yellow koji mold</name>
    <dbReference type="NCBI Taxonomy" id="510516"/>
    <lineage>
        <taxon>Eukaryota</taxon>
        <taxon>Fungi</taxon>
        <taxon>Dikarya</taxon>
        <taxon>Ascomycota</taxon>
        <taxon>Pezizomycotina</taxon>
        <taxon>Eurotiomycetes</taxon>
        <taxon>Eurotiomycetidae</taxon>
        <taxon>Eurotiales</taxon>
        <taxon>Aspergillaceae</taxon>
        <taxon>Aspergillus</taxon>
        <taxon>Aspergillus subgen. Circumdati</taxon>
    </lineage>
</organism>